<comment type="function">
    <text evidence="1">Digests double-stranded RNA. Involved in the processing of primary rRNA transcript to yield the immediate precursors to the large and small rRNAs (23S and 16S). Processes some mRNAs, and tRNAs when they are encoded in the rRNA operon. Processes pre-crRNA and tracrRNA of type II CRISPR loci if present in the organism.</text>
</comment>
<comment type="catalytic activity">
    <reaction evidence="1">
        <text>Endonucleolytic cleavage to 5'-phosphomonoester.</text>
        <dbReference type="EC" id="3.1.26.3"/>
    </reaction>
</comment>
<comment type="cofactor">
    <cofactor evidence="1">
        <name>Mg(2+)</name>
        <dbReference type="ChEBI" id="CHEBI:18420"/>
    </cofactor>
</comment>
<comment type="subunit">
    <text evidence="1">Homodimer.</text>
</comment>
<comment type="subcellular location">
    <subcellularLocation>
        <location evidence="1">Cytoplasm</location>
    </subcellularLocation>
</comment>
<comment type="similarity">
    <text evidence="1">Belongs to the ribonuclease III family.</text>
</comment>
<accession>Q057R4</accession>
<dbReference type="EC" id="3.1.26.3" evidence="1"/>
<dbReference type="EMBL" id="CP000263">
    <property type="protein sequence ID" value="ABJ90635.1"/>
    <property type="molecule type" value="Genomic_DNA"/>
</dbReference>
<dbReference type="RefSeq" id="WP_011672554.1">
    <property type="nucleotide sequence ID" value="NC_008513.1"/>
</dbReference>
<dbReference type="SMR" id="Q057R4"/>
<dbReference type="STRING" id="372461.BCc_163"/>
<dbReference type="KEGG" id="bcc:BCc_163"/>
<dbReference type="eggNOG" id="COG0571">
    <property type="taxonomic scope" value="Bacteria"/>
</dbReference>
<dbReference type="HOGENOM" id="CLU_000907_1_1_6"/>
<dbReference type="OrthoDB" id="9805026at2"/>
<dbReference type="Proteomes" id="UP000000669">
    <property type="component" value="Chromosome"/>
</dbReference>
<dbReference type="GO" id="GO:0005737">
    <property type="term" value="C:cytoplasm"/>
    <property type="evidence" value="ECO:0007669"/>
    <property type="project" value="UniProtKB-SubCell"/>
</dbReference>
<dbReference type="GO" id="GO:0003725">
    <property type="term" value="F:double-stranded RNA binding"/>
    <property type="evidence" value="ECO:0007669"/>
    <property type="project" value="TreeGrafter"/>
</dbReference>
<dbReference type="GO" id="GO:0046872">
    <property type="term" value="F:metal ion binding"/>
    <property type="evidence" value="ECO:0007669"/>
    <property type="project" value="UniProtKB-KW"/>
</dbReference>
<dbReference type="GO" id="GO:0004525">
    <property type="term" value="F:ribonuclease III activity"/>
    <property type="evidence" value="ECO:0007669"/>
    <property type="project" value="UniProtKB-UniRule"/>
</dbReference>
<dbReference type="GO" id="GO:0019843">
    <property type="term" value="F:rRNA binding"/>
    <property type="evidence" value="ECO:0007669"/>
    <property type="project" value="UniProtKB-KW"/>
</dbReference>
<dbReference type="GO" id="GO:0006397">
    <property type="term" value="P:mRNA processing"/>
    <property type="evidence" value="ECO:0007669"/>
    <property type="project" value="UniProtKB-UniRule"/>
</dbReference>
<dbReference type="GO" id="GO:0010468">
    <property type="term" value="P:regulation of gene expression"/>
    <property type="evidence" value="ECO:0007669"/>
    <property type="project" value="TreeGrafter"/>
</dbReference>
<dbReference type="GO" id="GO:0006364">
    <property type="term" value="P:rRNA processing"/>
    <property type="evidence" value="ECO:0007669"/>
    <property type="project" value="UniProtKB-UniRule"/>
</dbReference>
<dbReference type="GO" id="GO:0008033">
    <property type="term" value="P:tRNA processing"/>
    <property type="evidence" value="ECO:0007669"/>
    <property type="project" value="UniProtKB-KW"/>
</dbReference>
<dbReference type="CDD" id="cd10845">
    <property type="entry name" value="DSRM_RNAse_III_family"/>
    <property type="match status" value="1"/>
</dbReference>
<dbReference type="CDD" id="cd00593">
    <property type="entry name" value="RIBOc"/>
    <property type="match status" value="1"/>
</dbReference>
<dbReference type="FunFam" id="1.10.1520.10:FF:000001">
    <property type="entry name" value="Ribonuclease 3"/>
    <property type="match status" value="1"/>
</dbReference>
<dbReference type="FunFam" id="3.30.160.20:FF:000003">
    <property type="entry name" value="Ribonuclease 3"/>
    <property type="match status" value="1"/>
</dbReference>
<dbReference type="Gene3D" id="3.30.160.20">
    <property type="match status" value="1"/>
</dbReference>
<dbReference type="Gene3D" id="1.10.1520.10">
    <property type="entry name" value="Ribonuclease III domain"/>
    <property type="match status" value="1"/>
</dbReference>
<dbReference type="HAMAP" id="MF_00104">
    <property type="entry name" value="RNase_III"/>
    <property type="match status" value="1"/>
</dbReference>
<dbReference type="InterPro" id="IPR014720">
    <property type="entry name" value="dsRBD_dom"/>
</dbReference>
<dbReference type="InterPro" id="IPR011907">
    <property type="entry name" value="RNase_III"/>
</dbReference>
<dbReference type="InterPro" id="IPR000999">
    <property type="entry name" value="RNase_III_dom"/>
</dbReference>
<dbReference type="InterPro" id="IPR036389">
    <property type="entry name" value="RNase_III_sf"/>
</dbReference>
<dbReference type="NCBIfam" id="TIGR02191">
    <property type="entry name" value="RNaseIII"/>
    <property type="match status" value="1"/>
</dbReference>
<dbReference type="PANTHER" id="PTHR11207:SF0">
    <property type="entry name" value="RIBONUCLEASE 3"/>
    <property type="match status" value="1"/>
</dbReference>
<dbReference type="PANTHER" id="PTHR11207">
    <property type="entry name" value="RIBONUCLEASE III"/>
    <property type="match status" value="1"/>
</dbReference>
<dbReference type="Pfam" id="PF00035">
    <property type="entry name" value="dsrm"/>
    <property type="match status" value="1"/>
</dbReference>
<dbReference type="Pfam" id="PF14622">
    <property type="entry name" value="Ribonucleas_3_3"/>
    <property type="match status" value="1"/>
</dbReference>
<dbReference type="SMART" id="SM00358">
    <property type="entry name" value="DSRM"/>
    <property type="match status" value="1"/>
</dbReference>
<dbReference type="SMART" id="SM00535">
    <property type="entry name" value="RIBOc"/>
    <property type="match status" value="1"/>
</dbReference>
<dbReference type="SUPFAM" id="SSF54768">
    <property type="entry name" value="dsRNA-binding domain-like"/>
    <property type="match status" value="1"/>
</dbReference>
<dbReference type="SUPFAM" id="SSF69065">
    <property type="entry name" value="RNase III domain-like"/>
    <property type="match status" value="1"/>
</dbReference>
<dbReference type="PROSITE" id="PS50137">
    <property type="entry name" value="DS_RBD"/>
    <property type="match status" value="1"/>
</dbReference>
<dbReference type="PROSITE" id="PS00517">
    <property type="entry name" value="RNASE_3_1"/>
    <property type="match status" value="1"/>
</dbReference>
<dbReference type="PROSITE" id="PS50142">
    <property type="entry name" value="RNASE_3_2"/>
    <property type="match status" value="1"/>
</dbReference>
<protein>
    <recommendedName>
        <fullName evidence="1">Ribonuclease 3</fullName>
        <ecNumber evidence="1">3.1.26.3</ecNumber>
    </recommendedName>
    <alternativeName>
        <fullName evidence="1">Ribonuclease III</fullName>
        <shortName evidence="1">RNase III</shortName>
    </alternativeName>
</protein>
<sequence length="226" mass="25705">MNPIVMKKLQKFIGYTFTNITLLKHALTHRSASSQHNERLEFLGDSILSFIIAKALYHHFPKMNEGGMSRMRATLVRGNTLAEIATEFSLGKYLQLGQGEKKSGGFKRESILANAIEAIIASIFLDSNIYTVERIILYWYKNRFKKMNPTGTKKDPKTRLQEYLQSKHFSLPIYSIGQIYGEAHNQIFTIYCKIDGLSELLIGIGASRRKAEQDAAQNALIRLEVE</sequence>
<reference key="1">
    <citation type="journal article" date="2006" name="Science">
        <title>A small microbial genome: the end of a long symbiotic relationship?</title>
        <authorList>
            <person name="Perez-Brocal V."/>
            <person name="Gil R."/>
            <person name="Ramos S."/>
            <person name="Lamelas A."/>
            <person name="Postigo M."/>
            <person name="Michelena J.M."/>
            <person name="Silva F.J."/>
            <person name="Moya A."/>
            <person name="Latorre A."/>
        </authorList>
    </citation>
    <scope>NUCLEOTIDE SEQUENCE [LARGE SCALE GENOMIC DNA]</scope>
    <source>
        <strain>Cc</strain>
    </source>
</reference>
<keyword id="KW-0963">Cytoplasm</keyword>
<keyword id="KW-0255">Endonuclease</keyword>
<keyword id="KW-0378">Hydrolase</keyword>
<keyword id="KW-0460">Magnesium</keyword>
<keyword id="KW-0479">Metal-binding</keyword>
<keyword id="KW-0507">mRNA processing</keyword>
<keyword id="KW-0540">Nuclease</keyword>
<keyword id="KW-1185">Reference proteome</keyword>
<keyword id="KW-0694">RNA-binding</keyword>
<keyword id="KW-0698">rRNA processing</keyword>
<keyword id="KW-0699">rRNA-binding</keyword>
<keyword id="KW-0819">tRNA processing</keyword>
<gene>
    <name evidence="1" type="primary">rnc</name>
    <name type="ordered locus">BCc_163</name>
</gene>
<organism>
    <name type="scientific">Buchnera aphidicola subsp. Cinara cedri (strain Cc)</name>
    <dbReference type="NCBI Taxonomy" id="372461"/>
    <lineage>
        <taxon>Bacteria</taxon>
        <taxon>Pseudomonadati</taxon>
        <taxon>Pseudomonadota</taxon>
        <taxon>Gammaproteobacteria</taxon>
        <taxon>Enterobacterales</taxon>
        <taxon>Erwiniaceae</taxon>
        <taxon>Buchnera</taxon>
    </lineage>
</organism>
<name>RNC_BUCCC</name>
<evidence type="ECO:0000255" key="1">
    <source>
        <dbReference type="HAMAP-Rule" id="MF_00104"/>
    </source>
</evidence>
<feature type="chain" id="PRO_1000075731" description="Ribonuclease 3">
    <location>
        <begin position="1"/>
        <end position="226"/>
    </location>
</feature>
<feature type="domain" description="RNase III" evidence="1">
    <location>
        <begin position="6"/>
        <end position="128"/>
    </location>
</feature>
<feature type="domain" description="DRBM" evidence="1">
    <location>
        <begin position="155"/>
        <end position="225"/>
    </location>
</feature>
<feature type="active site" evidence="1">
    <location>
        <position position="45"/>
    </location>
</feature>
<feature type="active site" evidence="1">
    <location>
        <position position="117"/>
    </location>
</feature>
<feature type="binding site" evidence="1">
    <location>
        <position position="41"/>
    </location>
    <ligand>
        <name>Mg(2+)</name>
        <dbReference type="ChEBI" id="CHEBI:18420"/>
    </ligand>
</feature>
<feature type="binding site" evidence="1">
    <location>
        <position position="114"/>
    </location>
    <ligand>
        <name>Mg(2+)</name>
        <dbReference type="ChEBI" id="CHEBI:18420"/>
    </ligand>
</feature>
<feature type="binding site" evidence="1">
    <location>
        <position position="117"/>
    </location>
    <ligand>
        <name>Mg(2+)</name>
        <dbReference type="ChEBI" id="CHEBI:18420"/>
    </ligand>
</feature>
<proteinExistence type="inferred from homology"/>